<organism>
    <name type="scientific">Mus musculus</name>
    <name type="common">Mouse</name>
    <dbReference type="NCBI Taxonomy" id="10090"/>
    <lineage>
        <taxon>Eukaryota</taxon>
        <taxon>Metazoa</taxon>
        <taxon>Chordata</taxon>
        <taxon>Craniata</taxon>
        <taxon>Vertebrata</taxon>
        <taxon>Euteleostomi</taxon>
        <taxon>Mammalia</taxon>
        <taxon>Eutheria</taxon>
        <taxon>Euarchontoglires</taxon>
        <taxon>Glires</taxon>
        <taxon>Rodentia</taxon>
        <taxon>Myomorpha</taxon>
        <taxon>Muroidea</taxon>
        <taxon>Muridae</taxon>
        <taxon>Murinae</taxon>
        <taxon>Mus</taxon>
        <taxon>Mus</taxon>
    </lineage>
</organism>
<proteinExistence type="evidence at protein level"/>
<sequence length="612" mass="69148">MSNSHPLRPFTAVGEIDHVHILSEHIGALLIGEEYGDVTFVVEKKHFPAHRVILAARCQYFRALLYGGMRESQPEAEIPLQDTTAEAFTMLLRYIYTGRATLTDEKEEVLLDFLSLAHKYGFPELEDSTSEYLCTILNIQNVCMTFDVASLYSLPKLTCMCCMFMDRNAQEVLASDGFLSLSKTALLNIVLRDSFAAPEKDIFLALLNWCKHNAKENHAEIMQAVRLPLMSLTELLNVVRPSGLLSPDAILDAIKVRSESRDMDLNYRGMLIPEENIATMKYGAQVVKGELKSALLDGDTQNYDLDHGFSRHPIDDDCRSGIEIKLGQPSIINHIRLLLWDRDSRSYSYFIEVSMDELDWIRVIDHSHYLCRSWQKLYFPARVCRYIRIVGTHNTVNKIFHIVAFECMFTNKAFTLEKGLIVPLENVATIADCASVIEGVSRSRNALLNGDTKNYDWDSGYTCHQLGSGAIVVQLAQPYIIGSIRLLLWDCDDRSYSYYVEVSTNQQQWTMVADRTKVSCKSWQSVTFERQPASFIRIVGTHNTANEVFHCVHFECPEQQSNQKEDSSEEPGTGDPSTPNQQLDPHAPRAPSASSLPPSPGPNSRSPNQQNQ</sequence>
<comment type="tissue specificity">
    <text evidence="3">Expressed in the brain (at protein level).</text>
</comment>
<name>BTBD9_MOUSE</name>
<keyword id="KW-1185">Reference proteome</keyword>
<reference key="1">
    <citation type="journal article" date="2005" name="Science">
        <title>The transcriptional landscape of the mammalian genome.</title>
        <authorList>
            <person name="Carninci P."/>
            <person name="Kasukawa T."/>
            <person name="Katayama S."/>
            <person name="Gough J."/>
            <person name="Frith M.C."/>
            <person name="Maeda N."/>
            <person name="Oyama R."/>
            <person name="Ravasi T."/>
            <person name="Lenhard B."/>
            <person name="Wells C."/>
            <person name="Kodzius R."/>
            <person name="Shimokawa K."/>
            <person name="Bajic V.B."/>
            <person name="Brenner S.E."/>
            <person name="Batalov S."/>
            <person name="Forrest A.R."/>
            <person name="Zavolan M."/>
            <person name="Davis M.J."/>
            <person name="Wilming L.G."/>
            <person name="Aidinis V."/>
            <person name="Allen J.E."/>
            <person name="Ambesi-Impiombato A."/>
            <person name="Apweiler R."/>
            <person name="Aturaliya R.N."/>
            <person name="Bailey T.L."/>
            <person name="Bansal M."/>
            <person name="Baxter L."/>
            <person name="Beisel K.W."/>
            <person name="Bersano T."/>
            <person name="Bono H."/>
            <person name="Chalk A.M."/>
            <person name="Chiu K.P."/>
            <person name="Choudhary V."/>
            <person name="Christoffels A."/>
            <person name="Clutterbuck D.R."/>
            <person name="Crowe M.L."/>
            <person name="Dalla E."/>
            <person name="Dalrymple B.P."/>
            <person name="de Bono B."/>
            <person name="Della Gatta G."/>
            <person name="di Bernardo D."/>
            <person name="Down T."/>
            <person name="Engstrom P."/>
            <person name="Fagiolini M."/>
            <person name="Faulkner G."/>
            <person name="Fletcher C.F."/>
            <person name="Fukushima T."/>
            <person name="Furuno M."/>
            <person name="Futaki S."/>
            <person name="Gariboldi M."/>
            <person name="Georgii-Hemming P."/>
            <person name="Gingeras T.R."/>
            <person name="Gojobori T."/>
            <person name="Green R.E."/>
            <person name="Gustincich S."/>
            <person name="Harbers M."/>
            <person name="Hayashi Y."/>
            <person name="Hensch T.K."/>
            <person name="Hirokawa N."/>
            <person name="Hill D."/>
            <person name="Huminiecki L."/>
            <person name="Iacono M."/>
            <person name="Ikeo K."/>
            <person name="Iwama A."/>
            <person name="Ishikawa T."/>
            <person name="Jakt M."/>
            <person name="Kanapin A."/>
            <person name="Katoh M."/>
            <person name="Kawasawa Y."/>
            <person name="Kelso J."/>
            <person name="Kitamura H."/>
            <person name="Kitano H."/>
            <person name="Kollias G."/>
            <person name="Krishnan S.P."/>
            <person name="Kruger A."/>
            <person name="Kummerfeld S.K."/>
            <person name="Kurochkin I.V."/>
            <person name="Lareau L.F."/>
            <person name="Lazarevic D."/>
            <person name="Lipovich L."/>
            <person name="Liu J."/>
            <person name="Liuni S."/>
            <person name="McWilliam S."/>
            <person name="Madan Babu M."/>
            <person name="Madera M."/>
            <person name="Marchionni L."/>
            <person name="Matsuda H."/>
            <person name="Matsuzawa S."/>
            <person name="Miki H."/>
            <person name="Mignone F."/>
            <person name="Miyake S."/>
            <person name="Morris K."/>
            <person name="Mottagui-Tabar S."/>
            <person name="Mulder N."/>
            <person name="Nakano N."/>
            <person name="Nakauchi H."/>
            <person name="Ng P."/>
            <person name="Nilsson R."/>
            <person name="Nishiguchi S."/>
            <person name="Nishikawa S."/>
            <person name="Nori F."/>
            <person name="Ohara O."/>
            <person name="Okazaki Y."/>
            <person name="Orlando V."/>
            <person name="Pang K.C."/>
            <person name="Pavan W.J."/>
            <person name="Pavesi G."/>
            <person name="Pesole G."/>
            <person name="Petrovsky N."/>
            <person name="Piazza S."/>
            <person name="Reed J."/>
            <person name="Reid J.F."/>
            <person name="Ring B.Z."/>
            <person name="Ringwald M."/>
            <person name="Rost B."/>
            <person name="Ruan Y."/>
            <person name="Salzberg S.L."/>
            <person name="Sandelin A."/>
            <person name="Schneider C."/>
            <person name="Schoenbach C."/>
            <person name="Sekiguchi K."/>
            <person name="Semple C.A."/>
            <person name="Seno S."/>
            <person name="Sessa L."/>
            <person name="Sheng Y."/>
            <person name="Shibata Y."/>
            <person name="Shimada H."/>
            <person name="Shimada K."/>
            <person name="Silva D."/>
            <person name="Sinclair B."/>
            <person name="Sperling S."/>
            <person name="Stupka E."/>
            <person name="Sugiura K."/>
            <person name="Sultana R."/>
            <person name="Takenaka Y."/>
            <person name="Taki K."/>
            <person name="Tammoja K."/>
            <person name="Tan S.L."/>
            <person name="Tang S."/>
            <person name="Taylor M.S."/>
            <person name="Tegner J."/>
            <person name="Teichmann S.A."/>
            <person name="Ueda H.R."/>
            <person name="van Nimwegen E."/>
            <person name="Verardo R."/>
            <person name="Wei C.L."/>
            <person name="Yagi K."/>
            <person name="Yamanishi H."/>
            <person name="Zabarovsky E."/>
            <person name="Zhu S."/>
            <person name="Zimmer A."/>
            <person name="Hide W."/>
            <person name="Bult C."/>
            <person name="Grimmond S.M."/>
            <person name="Teasdale R.D."/>
            <person name="Liu E.T."/>
            <person name="Brusic V."/>
            <person name="Quackenbush J."/>
            <person name="Wahlestedt C."/>
            <person name="Mattick J.S."/>
            <person name="Hume D.A."/>
            <person name="Kai C."/>
            <person name="Sasaki D."/>
            <person name="Tomaru Y."/>
            <person name="Fukuda S."/>
            <person name="Kanamori-Katayama M."/>
            <person name="Suzuki M."/>
            <person name="Aoki J."/>
            <person name="Arakawa T."/>
            <person name="Iida J."/>
            <person name="Imamura K."/>
            <person name="Itoh M."/>
            <person name="Kato T."/>
            <person name="Kawaji H."/>
            <person name="Kawagashira N."/>
            <person name="Kawashima T."/>
            <person name="Kojima M."/>
            <person name="Kondo S."/>
            <person name="Konno H."/>
            <person name="Nakano K."/>
            <person name="Ninomiya N."/>
            <person name="Nishio T."/>
            <person name="Okada M."/>
            <person name="Plessy C."/>
            <person name="Shibata K."/>
            <person name="Shiraki T."/>
            <person name="Suzuki S."/>
            <person name="Tagami M."/>
            <person name="Waki K."/>
            <person name="Watahiki A."/>
            <person name="Okamura-Oho Y."/>
            <person name="Suzuki H."/>
            <person name="Kawai J."/>
            <person name="Hayashizaki Y."/>
        </authorList>
    </citation>
    <scope>NUCLEOTIDE SEQUENCE [LARGE SCALE MRNA]</scope>
    <source>
        <strain>C57BL/6J</strain>
        <tissue>Kidney</tissue>
    </source>
</reference>
<reference key="2">
    <citation type="journal article" date="2004" name="Genome Res.">
        <title>The status, quality, and expansion of the NIH full-length cDNA project: the Mammalian Gene Collection (MGC).</title>
        <authorList>
            <consortium name="The MGC Project Team"/>
        </authorList>
    </citation>
    <scope>NUCLEOTIDE SEQUENCE [LARGE SCALE MRNA]</scope>
    <source>
        <strain>C57BL/6J</strain>
        <tissue>Mammary gland</tissue>
    </source>
</reference>
<reference key="3">
    <citation type="journal article" date="2012" name="Curr. Biol.">
        <title>Sleep fragmentation and motor restlessness in a Drosophila model of Restless Legs Syndrome.</title>
        <authorList>
            <person name="Freeman A."/>
            <person name="Pranski E."/>
            <person name="Miller R.D."/>
            <person name="Radmard S."/>
            <person name="Bernhard D."/>
            <person name="Jinnah H.A."/>
            <person name="Betarbet R."/>
            <person name="Rye D.B."/>
            <person name="Sanyal S."/>
        </authorList>
    </citation>
    <scope>TISSUE SPECIFICITY</scope>
</reference>
<accession>Q8C726</accession>
<gene>
    <name type="primary">Btbd9</name>
</gene>
<evidence type="ECO:0000255" key="1">
    <source>
        <dbReference type="PROSITE-ProRule" id="PRU00037"/>
    </source>
</evidence>
<evidence type="ECO:0000256" key="2">
    <source>
        <dbReference type="SAM" id="MobiDB-lite"/>
    </source>
</evidence>
<evidence type="ECO:0000269" key="3">
    <source>
    </source>
</evidence>
<dbReference type="EMBL" id="AK052664">
    <property type="protein sequence ID" value="BAC35088.1"/>
    <property type="molecule type" value="mRNA"/>
</dbReference>
<dbReference type="EMBL" id="BC057897">
    <property type="protein sequence ID" value="AAH57897.1"/>
    <property type="molecule type" value="mRNA"/>
</dbReference>
<dbReference type="CCDS" id="CCDS28599.1"/>
<dbReference type="RefSeq" id="NP_081336.1">
    <property type="nucleotide sequence ID" value="NM_027060.1"/>
</dbReference>
<dbReference type="RefSeq" id="NP_766206.1">
    <property type="nucleotide sequence ID" value="NM_172618.2"/>
</dbReference>
<dbReference type="RefSeq" id="XP_030105556.1">
    <property type="nucleotide sequence ID" value="XM_030249696.2"/>
</dbReference>
<dbReference type="SMR" id="Q8C726"/>
<dbReference type="BioGRID" id="230301">
    <property type="interactions" value="5"/>
</dbReference>
<dbReference type="FunCoup" id="Q8C726">
    <property type="interactions" value="1191"/>
</dbReference>
<dbReference type="IntAct" id="Q8C726">
    <property type="interactions" value="1"/>
</dbReference>
<dbReference type="STRING" id="10090.ENSMUSP00000127300"/>
<dbReference type="iPTMnet" id="Q8C726"/>
<dbReference type="PhosphoSitePlus" id="Q8C726"/>
<dbReference type="PaxDb" id="10090-ENSMUSP00000127300"/>
<dbReference type="ProteomicsDB" id="265316"/>
<dbReference type="Antibodypedia" id="29854">
    <property type="antibodies" value="128 antibodies from 20 providers"/>
</dbReference>
<dbReference type="Ensembl" id="ENSMUST00000079924.8">
    <property type="protein sequence ID" value="ENSMUSP00000078845.6"/>
    <property type="gene ID" value="ENSMUSG00000062202.15"/>
</dbReference>
<dbReference type="Ensembl" id="ENSMUST00000168787.8">
    <property type="protein sequence ID" value="ENSMUSP00000127300.2"/>
    <property type="gene ID" value="ENSMUSG00000062202.15"/>
</dbReference>
<dbReference type="Ensembl" id="ENSMUST00000237048.2">
    <property type="protein sequence ID" value="ENSMUSP00000157449.2"/>
    <property type="gene ID" value="ENSMUSG00000062202.15"/>
</dbReference>
<dbReference type="GeneID" id="224671"/>
<dbReference type="KEGG" id="mmu:224671"/>
<dbReference type="UCSC" id="uc008btt.2">
    <property type="organism name" value="mouse"/>
</dbReference>
<dbReference type="AGR" id="MGI:1916625"/>
<dbReference type="CTD" id="114781"/>
<dbReference type="MGI" id="MGI:1916625">
    <property type="gene designation" value="Btbd9"/>
</dbReference>
<dbReference type="VEuPathDB" id="HostDB:ENSMUSG00000062202"/>
<dbReference type="eggNOG" id="KOG4350">
    <property type="taxonomic scope" value="Eukaryota"/>
</dbReference>
<dbReference type="GeneTree" id="ENSGT00940000158298"/>
<dbReference type="HOGENOM" id="CLU_004253_0_2_1"/>
<dbReference type="InParanoid" id="Q8C726"/>
<dbReference type="OMA" id="LCMINHI"/>
<dbReference type="OrthoDB" id="9997739at2759"/>
<dbReference type="PhylomeDB" id="Q8C726"/>
<dbReference type="TreeFam" id="TF318638"/>
<dbReference type="BioGRID-ORCS" id="224671">
    <property type="hits" value="3 hits in 77 CRISPR screens"/>
</dbReference>
<dbReference type="ChiTaRS" id="Btbd9">
    <property type="organism name" value="mouse"/>
</dbReference>
<dbReference type="PRO" id="PR:Q8C726"/>
<dbReference type="Proteomes" id="UP000000589">
    <property type="component" value="Chromosome 17"/>
</dbReference>
<dbReference type="RNAct" id="Q8C726">
    <property type="molecule type" value="protein"/>
</dbReference>
<dbReference type="Bgee" id="ENSMUSG00000062202">
    <property type="expression patterns" value="Expressed in interventricular septum and 246 other cell types or tissues"/>
</dbReference>
<dbReference type="ExpressionAtlas" id="Q8C726">
    <property type="expression patterns" value="baseline and differential"/>
</dbReference>
<dbReference type="GO" id="GO:0098978">
    <property type="term" value="C:glutamatergic synapse"/>
    <property type="evidence" value="ECO:0000314"/>
    <property type="project" value="SynGO"/>
</dbReference>
<dbReference type="GO" id="GO:0008344">
    <property type="term" value="P:adult locomotory behavior"/>
    <property type="evidence" value="ECO:0000315"/>
    <property type="project" value="MGI"/>
</dbReference>
<dbReference type="GO" id="GO:0048512">
    <property type="term" value="P:circadian behavior"/>
    <property type="evidence" value="ECO:0000315"/>
    <property type="project" value="MGI"/>
</dbReference>
<dbReference type="GO" id="GO:0042748">
    <property type="term" value="P:circadian sleep/wake cycle, non-REM sleep"/>
    <property type="evidence" value="ECO:0000315"/>
    <property type="project" value="MGI"/>
</dbReference>
<dbReference type="GO" id="GO:0007616">
    <property type="term" value="P:long-term memory"/>
    <property type="evidence" value="ECO:0000315"/>
    <property type="project" value="MGI"/>
</dbReference>
<dbReference type="GO" id="GO:0050804">
    <property type="term" value="P:modulation of chemical synaptic transmission"/>
    <property type="evidence" value="ECO:0000314"/>
    <property type="project" value="SynGO"/>
</dbReference>
<dbReference type="GO" id="GO:0060586">
    <property type="term" value="P:multicellular organismal-level iron ion homeostasis"/>
    <property type="evidence" value="ECO:0000315"/>
    <property type="project" value="MGI"/>
</dbReference>
<dbReference type="GO" id="GO:1900242">
    <property type="term" value="P:regulation of synaptic vesicle endocytosis"/>
    <property type="evidence" value="ECO:0000315"/>
    <property type="project" value="MGI"/>
</dbReference>
<dbReference type="GO" id="GO:0050951">
    <property type="term" value="P:sensory perception of temperature stimulus"/>
    <property type="evidence" value="ECO:0000315"/>
    <property type="project" value="MGI"/>
</dbReference>
<dbReference type="GO" id="GO:0042428">
    <property type="term" value="P:serotonin metabolic process"/>
    <property type="evidence" value="ECO:0000315"/>
    <property type="project" value="MGI"/>
</dbReference>
<dbReference type="CDD" id="cd14822">
    <property type="entry name" value="BACK_BTBD9"/>
    <property type="match status" value="1"/>
</dbReference>
<dbReference type="CDD" id="cd18287">
    <property type="entry name" value="BTB_POZ_BTBD9"/>
    <property type="match status" value="1"/>
</dbReference>
<dbReference type="FunFam" id="1.25.40.420:FF:000005">
    <property type="entry name" value="BTB/POZ domain-containing protein 9"/>
    <property type="match status" value="1"/>
</dbReference>
<dbReference type="FunFam" id="2.60.120.260:FF:000038">
    <property type="entry name" value="BTB/POZ domain-containing protein 9"/>
    <property type="match status" value="1"/>
</dbReference>
<dbReference type="FunFam" id="2.60.120.260:FF:000051">
    <property type="entry name" value="BTB/POZ domain-containing protein 9"/>
    <property type="match status" value="1"/>
</dbReference>
<dbReference type="FunFam" id="3.30.710.10:FF:000042">
    <property type="entry name" value="BTB/POZ domain-containing protein 9"/>
    <property type="match status" value="1"/>
</dbReference>
<dbReference type="Gene3D" id="1.25.40.420">
    <property type="match status" value="1"/>
</dbReference>
<dbReference type="Gene3D" id="2.60.120.260">
    <property type="entry name" value="Galactose-binding domain-like"/>
    <property type="match status" value="2"/>
</dbReference>
<dbReference type="Gene3D" id="3.30.710.10">
    <property type="entry name" value="Potassium Channel Kv1.1, Chain A"/>
    <property type="match status" value="1"/>
</dbReference>
<dbReference type="InterPro" id="IPR011705">
    <property type="entry name" value="BACK"/>
</dbReference>
<dbReference type="InterPro" id="IPR000210">
    <property type="entry name" value="BTB/POZ_dom"/>
</dbReference>
<dbReference type="InterPro" id="IPR052407">
    <property type="entry name" value="BTB_POZ_domain_cont_9"/>
</dbReference>
<dbReference type="InterPro" id="IPR034091">
    <property type="entry name" value="BTBD9_BACK-like_dom"/>
</dbReference>
<dbReference type="InterPro" id="IPR000421">
    <property type="entry name" value="FA58C"/>
</dbReference>
<dbReference type="InterPro" id="IPR008979">
    <property type="entry name" value="Galactose-bd-like_sf"/>
</dbReference>
<dbReference type="InterPro" id="IPR011333">
    <property type="entry name" value="SKP1/BTB/POZ_sf"/>
</dbReference>
<dbReference type="PANTHER" id="PTHR46306">
    <property type="entry name" value="BTB/POZ DOMAIN-CONTAINING PROTEIN 9"/>
    <property type="match status" value="1"/>
</dbReference>
<dbReference type="PANTHER" id="PTHR46306:SF1">
    <property type="entry name" value="BTB_POZ DOMAIN-CONTAINING PROTEIN 9"/>
    <property type="match status" value="1"/>
</dbReference>
<dbReference type="Pfam" id="PF07707">
    <property type="entry name" value="BACK"/>
    <property type="match status" value="1"/>
</dbReference>
<dbReference type="Pfam" id="PF00651">
    <property type="entry name" value="BTB"/>
    <property type="match status" value="1"/>
</dbReference>
<dbReference type="Pfam" id="PF00754">
    <property type="entry name" value="F5_F8_type_C"/>
    <property type="match status" value="2"/>
</dbReference>
<dbReference type="SMART" id="SM00875">
    <property type="entry name" value="BACK"/>
    <property type="match status" value="1"/>
</dbReference>
<dbReference type="SMART" id="SM00225">
    <property type="entry name" value="BTB"/>
    <property type="match status" value="1"/>
</dbReference>
<dbReference type="SUPFAM" id="SSF49785">
    <property type="entry name" value="Galactose-binding domain-like"/>
    <property type="match status" value="2"/>
</dbReference>
<dbReference type="SUPFAM" id="SSF54695">
    <property type="entry name" value="POZ domain"/>
    <property type="match status" value="1"/>
</dbReference>
<dbReference type="PROSITE" id="PS50097">
    <property type="entry name" value="BTB"/>
    <property type="match status" value="1"/>
</dbReference>
<feature type="chain" id="PRO_0000186218" description="BTB/POZ domain-containing protein 9">
    <location>
        <begin position="1"/>
        <end position="612"/>
    </location>
</feature>
<feature type="domain" description="BTB" evidence="1">
    <location>
        <begin position="36"/>
        <end position="104"/>
    </location>
</feature>
<feature type="domain" description="BACK">
    <location>
        <begin position="142"/>
        <end position="240"/>
    </location>
</feature>
<feature type="region of interest" description="Disordered" evidence="2">
    <location>
        <begin position="559"/>
        <end position="612"/>
    </location>
</feature>
<feature type="compositionally biased region" description="Low complexity" evidence="2">
    <location>
        <begin position="589"/>
        <end position="612"/>
    </location>
</feature>
<protein>
    <recommendedName>
        <fullName>BTB/POZ domain-containing protein 9</fullName>
    </recommendedName>
</protein>